<feature type="chain" id="PRO_1000017853" description="Peptidase T">
    <location>
        <begin position="1"/>
        <end position="406"/>
    </location>
</feature>
<feature type="active site" evidence="1">
    <location>
        <position position="83"/>
    </location>
</feature>
<feature type="active site" description="Proton acceptor" evidence="1">
    <location>
        <position position="176"/>
    </location>
</feature>
<feature type="binding site" evidence="1">
    <location>
        <position position="81"/>
    </location>
    <ligand>
        <name>Zn(2+)</name>
        <dbReference type="ChEBI" id="CHEBI:29105"/>
        <label>1</label>
    </ligand>
</feature>
<feature type="binding site" evidence="1">
    <location>
        <position position="142"/>
    </location>
    <ligand>
        <name>Zn(2+)</name>
        <dbReference type="ChEBI" id="CHEBI:29105"/>
        <label>1</label>
    </ligand>
</feature>
<feature type="binding site" evidence="1">
    <location>
        <position position="142"/>
    </location>
    <ligand>
        <name>Zn(2+)</name>
        <dbReference type="ChEBI" id="CHEBI:29105"/>
        <label>2</label>
    </ligand>
</feature>
<feature type="binding site" evidence="1">
    <location>
        <position position="177"/>
    </location>
    <ligand>
        <name>Zn(2+)</name>
        <dbReference type="ChEBI" id="CHEBI:29105"/>
        <label>2</label>
    </ligand>
</feature>
<feature type="binding site" evidence="1">
    <location>
        <position position="199"/>
    </location>
    <ligand>
        <name>Zn(2+)</name>
        <dbReference type="ChEBI" id="CHEBI:29105"/>
        <label>1</label>
    </ligand>
</feature>
<feature type="binding site" evidence="1">
    <location>
        <position position="381"/>
    </location>
    <ligand>
        <name>Zn(2+)</name>
        <dbReference type="ChEBI" id="CHEBI:29105"/>
        <label>2</label>
    </ligand>
</feature>
<comment type="function">
    <text evidence="1">Cleaves the N-terminal amino acid of tripeptides.</text>
</comment>
<comment type="catalytic activity">
    <reaction evidence="1">
        <text>Release of the N-terminal residue from a tripeptide.</text>
        <dbReference type="EC" id="3.4.11.4"/>
    </reaction>
</comment>
<comment type="cofactor">
    <cofactor evidence="1">
        <name>Zn(2+)</name>
        <dbReference type="ChEBI" id="CHEBI:29105"/>
    </cofactor>
    <text evidence="1">Binds 2 Zn(2+) ions per subunit.</text>
</comment>
<comment type="subcellular location">
    <subcellularLocation>
        <location evidence="1">Cytoplasm</location>
    </subcellularLocation>
</comment>
<comment type="similarity">
    <text evidence="1">Belongs to the peptidase M20B family.</text>
</comment>
<protein>
    <recommendedName>
        <fullName evidence="1">Peptidase T</fullName>
        <ecNumber evidence="1">3.4.11.4</ecNumber>
    </recommendedName>
    <alternativeName>
        <fullName evidence="1">Aminotripeptidase</fullName>
        <shortName evidence="1">Tripeptidase</shortName>
    </alternativeName>
    <alternativeName>
        <fullName evidence="1">Tripeptide aminopeptidase</fullName>
    </alternativeName>
</protein>
<organism>
    <name type="scientific">Streptococcus pneumoniae serotype 2 (strain D39 / NCTC 7466)</name>
    <dbReference type="NCBI Taxonomy" id="373153"/>
    <lineage>
        <taxon>Bacteria</taxon>
        <taxon>Bacillati</taxon>
        <taxon>Bacillota</taxon>
        <taxon>Bacilli</taxon>
        <taxon>Lactobacillales</taxon>
        <taxon>Streptococcaceae</taxon>
        <taxon>Streptococcus</taxon>
    </lineage>
</organism>
<dbReference type="EC" id="3.4.11.4" evidence="1"/>
<dbReference type="EMBL" id="CP000410">
    <property type="protein sequence ID" value="ABJ54157.1"/>
    <property type="molecule type" value="Genomic_DNA"/>
</dbReference>
<dbReference type="RefSeq" id="WP_000222027.1">
    <property type="nucleotide sequence ID" value="NZ_JAMLJR010000011.1"/>
</dbReference>
<dbReference type="SMR" id="Q04KS5"/>
<dbReference type="MEROPS" id="M20.003"/>
<dbReference type="PaxDb" id="373153-SPD_0894"/>
<dbReference type="KEGG" id="spd:SPD_0894"/>
<dbReference type="eggNOG" id="COG2195">
    <property type="taxonomic scope" value="Bacteria"/>
</dbReference>
<dbReference type="HOGENOM" id="CLU_053676_0_0_9"/>
<dbReference type="BioCyc" id="SPNE373153:G1G6V-981-MONOMER"/>
<dbReference type="Proteomes" id="UP000001452">
    <property type="component" value="Chromosome"/>
</dbReference>
<dbReference type="GO" id="GO:0005829">
    <property type="term" value="C:cytosol"/>
    <property type="evidence" value="ECO:0007669"/>
    <property type="project" value="TreeGrafter"/>
</dbReference>
<dbReference type="GO" id="GO:0008237">
    <property type="term" value="F:metallopeptidase activity"/>
    <property type="evidence" value="ECO:0007669"/>
    <property type="project" value="UniProtKB-KW"/>
</dbReference>
<dbReference type="GO" id="GO:0045148">
    <property type="term" value="F:tripeptide aminopeptidase activity"/>
    <property type="evidence" value="ECO:0007669"/>
    <property type="project" value="UniProtKB-UniRule"/>
</dbReference>
<dbReference type="GO" id="GO:0008270">
    <property type="term" value="F:zinc ion binding"/>
    <property type="evidence" value="ECO:0007669"/>
    <property type="project" value="UniProtKB-UniRule"/>
</dbReference>
<dbReference type="GO" id="GO:0043171">
    <property type="term" value="P:peptide catabolic process"/>
    <property type="evidence" value="ECO:0007669"/>
    <property type="project" value="UniProtKB-UniRule"/>
</dbReference>
<dbReference type="GO" id="GO:0006508">
    <property type="term" value="P:proteolysis"/>
    <property type="evidence" value="ECO:0007669"/>
    <property type="project" value="UniProtKB-UniRule"/>
</dbReference>
<dbReference type="CDD" id="cd03892">
    <property type="entry name" value="M20_peptT"/>
    <property type="match status" value="1"/>
</dbReference>
<dbReference type="FunFam" id="3.30.70.360:FF:000002">
    <property type="entry name" value="Peptidase T"/>
    <property type="match status" value="1"/>
</dbReference>
<dbReference type="Gene3D" id="3.30.70.360">
    <property type="match status" value="1"/>
</dbReference>
<dbReference type="Gene3D" id="3.40.630.10">
    <property type="entry name" value="Zn peptidases"/>
    <property type="match status" value="1"/>
</dbReference>
<dbReference type="HAMAP" id="MF_00550">
    <property type="entry name" value="Aminopeptidase_M20"/>
    <property type="match status" value="1"/>
</dbReference>
<dbReference type="InterPro" id="IPR001261">
    <property type="entry name" value="ArgE/DapE_CS"/>
</dbReference>
<dbReference type="InterPro" id="IPR036264">
    <property type="entry name" value="Bact_exopeptidase_dim_dom"/>
</dbReference>
<dbReference type="InterPro" id="IPR002933">
    <property type="entry name" value="Peptidase_M20"/>
</dbReference>
<dbReference type="InterPro" id="IPR011650">
    <property type="entry name" value="Peptidase_M20_dimer"/>
</dbReference>
<dbReference type="InterPro" id="IPR010161">
    <property type="entry name" value="Peptidase_M20B"/>
</dbReference>
<dbReference type="NCBIfam" id="TIGR01882">
    <property type="entry name" value="peptidase-T"/>
    <property type="match status" value="1"/>
</dbReference>
<dbReference type="NCBIfam" id="NF003976">
    <property type="entry name" value="PRK05469.1"/>
    <property type="match status" value="1"/>
</dbReference>
<dbReference type="NCBIfam" id="NF009920">
    <property type="entry name" value="PRK13381.1"/>
    <property type="match status" value="1"/>
</dbReference>
<dbReference type="PANTHER" id="PTHR42994">
    <property type="entry name" value="PEPTIDASE T"/>
    <property type="match status" value="1"/>
</dbReference>
<dbReference type="PANTHER" id="PTHR42994:SF1">
    <property type="entry name" value="PEPTIDASE T"/>
    <property type="match status" value="1"/>
</dbReference>
<dbReference type="Pfam" id="PF07687">
    <property type="entry name" value="M20_dimer"/>
    <property type="match status" value="1"/>
</dbReference>
<dbReference type="Pfam" id="PF01546">
    <property type="entry name" value="Peptidase_M20"/>
    <property type="match status" value="1"/>
</dbReference>
<dbReference type="PIRSF" id="PIRSF037215">
    <property type="entry name" value="Peptidase_M20B"/>
    <property type="match status" value="1"/>
</dbReference>
<dbReference type="SUPFAM" id="SSF55031">
    <property type="entry name" value="Bacterial exopeptidase dimerisation domain"/>
    <property type="match status" value="1"/>
</dbReference>
<dbReference type="SUPFAM" id="SSF53187">
    <property type="entry name" value="Zn-dependent exopeptidases"/>
    <property type="match status" value="1"/>
</dbReference>
<dbReference type="PROSITE" id="PS00758">
    <property type="entry name" value="ARGE_DAPE_CPG2_1"/>
    <property type="match status" value="1"/>
</dbReference>
<dbReference type="PROSITE" id="PS00759">
    <property type="entry name" value="ARGE_DAPE_CPG2_2"/>
    <property type="match status" value="1"/>
</dbReference>
<gene>
    <name evidence="1" type="primary">pepT</name>
    <name type="ordered locus">SPD_0894</name>
</gene>
<evidence type="ECO:0000255" key="1">
    <source>
        <dbReference type="HAMAP-Rule" id="MF_00550"/>
    </source>
</evidence>
<accession>Q04KS5</accession>
<name>PEPT_STRP2</name>
<keyword id="KW-0031">Aminopeptidase</keyword>
<keyword id="KW-0963">Cytoplasm</keyword>
<keyword id="KW-0378">Hydrolase</keyword>
<keyword id="KW-0479">Metal-binding</keyword>
<keyword id="KW-0482">Metalloprotease</keyword>
<keyword id="KW-0645">Protease</keyword>
<keyword id="KW-1185">Reference proteome</keyword>
<keyword id="KW-0862">Zinc</keyword>
<reference key="1">
    <citation type="journal article" date="2007" name="J. Bacteriol.">
        <title>Genome sequence of Avery's virulent serotype 2 strain D39 of Streptococcus pneumoniae and comparison with that of unencapsulated laboratory strain R6.</title>
        <authorList>
            <person name="Lanie J.A."/>
            <person name="Ng W.-L."/>
            <person name="Kazmierczak K.M."/>
            <person name="Andrzejewski T.M."/>
            <person name="Davidsen T.M."/>
            <person name="Wayne K.J."/>
            <person name="Tettelin H."/>
            <person name="Glass J.I."/>
            <person name="Winkler M.E."/>
        </authorList>
    </citation>
    <scope>NUCLEOTIDE SEQUENCE [LARGE SCALE GENOMIC DNA]</scope>
    <source>
        <strain>D39 / NCTC 7466</strain>
    </source>
</reference>
<proteinExistence type="inferred from homology"/>
<sequence length="406" mass="44771">MTYPNLLDRFLTYVKVNTRSDEHSTTTPSTQSQVDFATNVLIPEMKRVGLQNVYYLPNGFAIGTLPANDPSLTRKIGFISHMDTADFNAEGVNPQVIENYDGCVIELGNSGFKLDPADFKSLEKYPGQTLITTDGTTLLGADDKSGIAEIMTAIEYLTAHPEIKHCEIRVGFGPDEEIGVGANKFDAEDFDVDFAYTVDGGPLGELQYETFSAAGAELHFQGRNVHPGTAKGQMVNALQLAIDFHNQLPENDRPELTEGYQGFYHLMDVTGSVEEARASYIIRDFEKDAFEARKASMQSIADKMNEELGSNRVTLNLTDQYYNMKEVIEKDMTPITIAKAVMEDLGITPIIEPIRGGTDGSKISFMGIPTPNIFAGGENMHGRFEYVSLQTMERAVDTIIGIVRSL</sequence>